<reference key="1">
    <citation type="journal article" date="2004" name="Nat. Biotechnol.">
        <title>Complete sequence and comparative genome analysis of the dairy bacterium Streptococcus thermophilus.</title>
        <authorList>
            <person name="Bolotin A."/>
            <person name="Quinquis B."/>
            <person name="Renault P."/>
            <person name="Sorokin A."/>
            <person name="Ehrlich S.D."/>
            <person name="Kulakauskas S."/>
            <person name="Lapidus A."/>
            <person name="Goltsman E."/>
            <person name="Mazur M."/>
            <person name="Pusch G.D."/>
            <person name="Fonstein M."/>
            <person name="Overbeek R."/>
            <person name="Kyprides N."/>
            <person name="Purnelle B."/>
            <person name="Prozzi D."/>
            <person name="Ngui K."/>
            <person name="Masuy D."/>
            <person name="Hancy F."/>
            <person name="Burteau S."/>
            <person name="Boutry M."/>
            <person name="Delcour J."/>
            <person name="Goffeau A."/>
            <person name="Hols P."/>
        </authorList>
    </citation>
    <scope>NUCLEOTIDE SEQUENCE [LARGE SCALE GENOMIC DNA]</scope>
    <source>
        <strain>ATCC BAA-250 / LMG 18311</strain>
    </source>
</reference>
<name>SSTT_STRT2</name>
<protein>
    <recommendedName>
        <fullName evidence="1">Serine/threonine transporter SstT</fullName>
    </recommendedName>
    <alternativeName>
        <fullName evidence="1">Na(+)/serine-threonine symporter</fullName>
    </alternativeName>
</protein>
<accession>Q5M5Z0</accession>
<keyword id="KW-0029">Amino-acid transport</keyword>
<keyword id="KW-1003">Cell membrane</keyword>
<keyword id="KW-0472">Membrane</keyword>
<keyword id="KW-1185">Reference proteome</keyword>
<keyword id="KW-0769">Symport</keyword>
<keyword id="KW-0812">Transmembrane</keyword>
<keyword id="KW-1133">Transmembrane helix</keyword>
<keyword id="KW-0813">Transport</keyword>
<sequence length="402" mass="42169">MKRFISAWNRTSLIKRIAIGVVIGAILGLLIPKITVIGLLGDMFVGGLKAIAPLLVSALVANALSQTREGQQSNMKTIIVLYLFGTFAAALTAVISHYIFPISLKLGAASATKAAAPQGVGEVFKDLMLKMVDNPINALSQANYIGVLVWSVVFGFAMRTASEHTKELLHTLAEVTSQIVRWIINLAPFGILGLVFDTISKNGVGVLADYGVLILVLVGTMTFVALVINPIIAFVMMGKNPFPLVFRCLKDSGITAFFTRSSAANIPVNLQLCEDLGLNPDTYSVSIPLGSTINMAGAAVTINVLTLAAVTTLGIEVDFATAFILSVVSTISACGASGIAGGSLLLVPVACSLFGISNDLAMQVVGVGFIVGVIQDSCETALNSSTDVLFTAVAEKSRWKKS</sequence>
<organism>
    <name type="scientific">Streptococcus thermophilus (strain ATCC BAA-250 / LMG 18311)</name>
    <dbReference type="NCBI Taxonomy" id="264199"/>
    <lineage>
        <taxon>Bacteria</taxon>
        <taxon>Bacillati</taxon>
        <taxon>Bacillota</taxon>
        <taxon>Bacilli</taxon>
        <taxon>Lactobacillales</taxon>
        <taxon>Streptococcaceae</taxon>
        <taxon>Streptococcus</taxon>
    </lineage>
</organism>
<feature type="chain" id="PRO_0000309149" description="Serine/threonine transporter SstT">
    <location>
        <begin position="1"/>
        <end position="402"/>
    </location>
</feature>
<feature type="transmembrane region" description="Helical" evidence="1">
    <location>
        <begin position="17"/>
        <end position="37"/>
    </location>
</feature>
<feature type="transmembrane region" description="Helical" evidence="1">
    <location>
        <begin position="44"/>
        <end position="64"/>
    </location>
</feature>
<feature type="transmembrane region" description="Helical" evidence="1">
    <location>
        <begin position="78"/>
        <end position="98"/>
    </location>
</feature>
<feature type="transmembrane region" description="Helical" evidence="1">
    <location>
        <begin position="138"/>
        <end position="158"/>
    </location>
</feature>
<feature type="transmembrane region" description="Helical" evidence="1">
    <location>
        <begin position="179"/>
        <end position="199"/>
    </location>
</feature>
<feature type="transmembrane region" description="Helical" evidence="1">
    <location>
        <begin position="212"/>
        <end position="232"/>
    </location>
</feature>
<feature type="transmembrane region" description="Helical" evidence="1">
    <location>
        <begin position="295"/>
        <end position="315"/>
    </location>
</feature>
<feature type="transmembrane region" description="Helical" evidence="1">
    <location>
        <begin position="336"/>
        <end position="356"/>
    </location>
</feature>
<proteinExistence type="inferred from homology"/>
<evidence type="ECO:0000255" key="1">
    <source>
        <dbReference type="HAMAP-Rule" id="MF_01582"/>
    </source>
</evidence>
<dbReference type="EMBL" id="CP000023">
    <property type="protein sequence ID" value="AAV60025.1"/>
    <property type="molecule type" value="Genomic_DNA"/>
</dbReference>
<dbReference type="RefSeq" id="WP_011225470.1">
    <property type="nucleotide sequence ID" value="NC_006448.1"/>
</dbReference>
<dbReference type="SMR" id="Q5M5Z0"/>
<dbReference type="STRING" id="264199.stu0303"/>
<dbReference type="GeneID" id="66898227"/>
<dbReference type="KEGG" id="stl:stu0303"/>
<dbReference type="PATRIC" id="fig|264199.4.peg.309"/>
<dbReference type="eggNOG" id="COG3633">
    <property type="taxonomic scope" value="Bacteria"/>
</dbReference>
<dbReference type="HOGENOM" id="CLU_044581_0_0_9"/>
<dbReference type="Proteomes" id="UP000001170">
    <property type="component" value="Chromosome"/>
</dbReference>
<dbReference type="GO" id="GO:0005886">
    <property type="term" value="C:plasma membrane"/>
    <property type="evidence" value="ECO:0007669"/>
    <property type="project" value="UniProtKB-SubCell"/>
</dbReference>
<dbReference type="GO" id="GO:0005295">
    <property type="term" value="F:neutral L-amino acid:sodium symporter activity"/>
    <property type="evidence" value="ECO:0007669"/>
    <property type="project" value="TreeGrafter"/>
</dbReference>
<dbReference type="GO" id="GO:0032329">
    <property type="term" value="P:serine transport"/>
    <property type="evidence" value="ECO:0007669"/>
    <property type="project" value="InterPro"/>
</dbReference>
<dbReference type="GO" id="GO:0015826">
    <property type="term" value="P:threonine transport"/>
    <property type="evidence" value="ECO:0007669"/>
    <property type="project" value="InterPro"/>
</dbReference>
<dbReference type="FunFam" id="1.10.3860.10:FF:000003">
    <property type="entry name" value="Serine/threonine transporter sstT"/>
    <property type="match status" value="1"/>
</dbReference>
<dbReference type="Gene3D" id="1.10.3860.10">
    <property type="entry name" value="Sodium:dicarboxylate symporter"/>
    <property type="match status" value="1"/>
</dbReference>
<dbReference type="HAMAP" id="MF_01582">
    <property type="entry name" value="Ser_Thr_transp_SstT"/>
    <property type="match status" value="1"/>
</dbReference>
<dbReference type="InterPro" id="IPR001991">
    <property type="entry name" value="Na-dicarboxylate_symporter"/>
</dbReference>
<dbReference type="InterPro" id="IPR036458">
    <property type="entry name" value="Na:dicarbo_symporter_sf"/>
</dbReference>
<dbReference type="InterPro" id="IPR023025">
    <property type="entry name" value="Ser_Thr_transp_SstT"/>
</dbReference>
<dbReference type="NCBIfam" id="NF010151">
    <property type="entry name" value="PRK13628.1"/>
    <property type="match status" value="1"/>
</dbReference>
<dbReference type="PANTHER" id="PTHR42865">
    <property type="entry name" value="PROTON/GLUTAMATE-ASPARTATE SYMPORTER"/>
    <property type="match status" value="1"/>
</dbReference>
<dbReference type="PANTHER" id="PTHR42865:SF8">
    <property type="entry name" value="SERINE_THREONINE TRANSPORTER SSTT"/>
    <property type="match status" value="1"/>
</dbReference>
<dbReference type="Pfam" id="PF00375">
    <property type="entry name" value="SDF"/>
    <property type="match status" value="1"/>
</dbReference>
<dbReference type="PRINTS" id="PR00173">
    <property type="entry name" value="EDTRNSPORT"/>
</dbReference>
<dbReference type="SUPFAM" id="SSF118215">
    <property type="entry name" value="Proton glutamate symport protein"/>
    <property type="match status" value="1"/>
</dbReference>
<comment type="function">
    <text evidence="1">Involved in the import of serine and threonine into the cell, with the concomitant import of sodium (symport system).</text>
</comment>
<comment type="catalytic activity">
    <reaction evidence="1">
        <text>L-serine(in) + Na(+)(in) = L-serine(out) + Na(+)(out)</text>
        <dbReference type="Rhea" id="RHEA:29575"/>
        <dbReference type="ChEBI" id="CHEBI:29101"/>
        <dbReference type="ChEBI" id="CHEBI:33384"/>
    </reaction>
    <physiologicalReaction direction="right-to-left" evidence="1">
        <dbReference type="Rhea" id="RHEA:29577"/>
    </physiologicalReaction>
</comment>
<comment type="catalytic activity">
    <reaction evidence="1">
        <text>L-threonine(in) + Na(+)(in) = L-threonine(out) + Na(+)(out)</text>
        <dbReference type="Rhea" id="RHEA:69999"/>
        <dbReference type="ChEBI" id="CHEBI:29101"/>
        <dbReference type="ChEBI" id="CHEBI:57926"/>
    </reaction>
    <physiologicalReaction direction="right-to-left" evidence="1">
        <dbReference type="Rhea" id="RHEA:70001"/>
    </physiologicalReaction>
</comment>
<comment type="subcellular location">
    <subcellularLocation>
        <location evidence="1">Cell membrane</location>
        <topology evidence="1">Multi-pass membrane protein</topology>
    </subcellularLocation>
</comment>
<comment type="similarity">
    <text evidence="1">Belongs to the dicarboxylate/amino acid:cation symporter (DAACS) (TC 2.A.23) family.</text>
</comment>
<gene>
    <name evidence="1" type="primary">sstT</name>
    <name type="ordered locus">stu0303</name>
</gene>